<dbReference type="EMBL" id="AF146523">
    <property type="protein sequence ID" value="AAD35019.1"/>
    <property type="molecule type" value="mRNA"/>
</dbReference>
<dbReference type="EMBL" id="AJ250490">
    <property type="protein sequence ID" value="CAB59512.1"/>
    <property type="molecule type" value="mRNA"/>
</dbReference>
<dbReference type="EMBL" id="AF209906">
    <property type="protein sequence ID" value="AAF21038.1"/>
    <property type="molecule type" value="mRNA"/>
</dbReference>
<dbReference type="EMBL" id="AK003810">
    <property type="protein sequence ID" value="BAB23009.1"/>
    <property type="molecule type" value="mRNA"/>
</dbReference>
<dbReference type="EMBL" id="BC069992">
    <property type="protein sequence ID" value="AAH69992.1"/>
    <property type="molecule type" value="mRNA"/>
</dbReference>
<dbReference type="CCDS" id="CCDS25457.1"/>
<dbReference type="PIR" id="JC7262">
    <property type="entry name" value="JC7262"/>
</dbReference>
<dbReference type="RefSeq" id="NP_062317.1">
    <property type="nucleotide sequence ID" value="NM_019444.2"/>
</dbReference>
<dbReference type="SMR" id="Q9WUP0"/>
<dbReference type="ComplexPortal" id="CPX-3150">
    <property type="entry name" value="Adrenomedullin receptor AM1 complex"/>
</dbReference>
<dbReference type="ComplexPortal" id="CPX-3236">
    <property type="entry name" value="Amylin receptor 2 complex"/>
</dbReference>
<dbReference type="CORUM" id="Q9WUP0"/>
<dbReference type="FunCoup" id="Q9WUP0">
    <property type="interactions" value="35"/>
</dbReference>
<dbReference type="STRING" id="10090.ENSMUSP00000122072"/>
<dbReference type="GuidetoPHARMACOLOGY" id="52"/>
<dbReference type="GlyCosmos" id="Q9WUP0">
    <property type="glycosylation" value="4 sites, No reported glycans"/>
</dbReference>
<dbReference type="GlyGen" id="Q9WUP0">
    <property type="glycosylation" value="4 sites"/>
</dbReference>
<dbReference type="PhosphoSitePlus" id="Q9WUP0"/>
<dbReference type="PaxDb" id="10090-ENSMUSP00000122072"/>
<dbReference type="PeptideAtlas" id="Q9WUP0"/>
<dbReference type="ProteomicsDB" id="255092"/>
<dbReference type="Antibodypedia" id="29403">
    <property type="antibodies" value="290 antibodies from 32 providers"/>
</dbReference>
<dbReference type="DNASU" id="54409"/>
<dbReference type="Ensembl" id="ENSMUST00000129680.8">
    <property type="protein sequence ID" value="ENSMUSP00000122072.2"/>
    <property type="gene ID" value="ENSMUSG00000001240.14"/>
</dbReference>
<dbReference type="GeneID" id="54409"/>
<dbReference type="KEGG" id="mmu:54409"/>
<dbReference type="UCSC" id="uc007lny.1">
    <property type="organism name" value="mouse"/>
</dbReference>
<dbReference type="AGR" id="MGI:1859650"/>
<dbReference type="CTD" id="10266"/>
<dbReference type="MGI" id="MGI:1859650">
    <property type="gene designation" value="Ramp2"/>
</dbReference>
<dbReference type="VEuPathDB" id="HostDB:ENSMUSG00000001240"/>
<dbReference type="eggNOG" id="ENOG502S5WC">
    <property type="taxonomic scope" value="Eukaryota"/>
</dbReference>
<dbReference type="GeneTree" id="ENSGT00940000160264"/>
<dbReference type="InParanoid" id="Q9WUP0"/>
<dbReference type="OMA" id="AVISXEV"/>
<dbReference type="OrthoDB" id="61339at9989"/>
<dbReference type="PhylomeDB" id="Q9WUP0"/>
<dbReference type="TreeFam" id="TF333286"/>
<dbReference type="Reactome" id="R-MMU-418555">
    <property type="pathway name" value="G alpha (s) signalling events"/>
</dbReference>
<dbReference type="Reactome" id="R-MMU-419812">
    <property type="pathway name" value="Calcitonin-like ligand receptors"/>
</dbReference>
<dbReference type="Reactome" id="R-MMU-9856530">
    <property type="pathway name" value="High laminar flow shear stress activates signaling by PIEZO1 and PECAM1:CDH5:KDR in endothelial cells"/>
</dbReference>
<dbReference type="BioGRID-ORCS" id="54409">
    <property type="hits" value="6 hits in 79 CRISPR screens"/>
</dbReference>
<dbReference type="ChiTaRS" id="Ramp2">
    <property type="organism name" value="mouse"/>
</dbReference>
<dbReference type="PRO" id="PR:Q9WUP0"/>
<dbReference type="Proteomes" id="UP000000589">
    <property type="component" value="Chromosome 11"/>
</dbReference>
<dbReference type="RNAct" id="Q9WUP0">
    <property type="molecule type" value="protein"/>
</dbReference>
<dbReference type="Bgee" id="ENSMUSG00000001240">
    <property type="expression patterns" value="Expressed in right lung and 244 other cell types or tissues"/>
</dbReference>
<dbReference type="ExpressionAtlas" id="Q9WUP0">
    <property type="expression patterns" value="baseline and differential"/>
</dbReference>
<dbReference type="GO" id="GO:1903143">
    <property type="term" value="C:adrenomedullin receptor complex"/>
    <property type="evidence" value="ECO:0007669"/>
    <property type="project" value="Ensembl"/>
</dbReference>
<dbReference type="GO" id="GO:0009986">
    <property type="term" value="C:cell surface"/>
    <property type="evidence" value="ECO:0000250"/>
    <property type="project" value="UniProtKB"/>
</dbReference>
<dbReference type="GO" id="GO:0005737">
    <property type="term" value="C:cytoplasm"/>
    <property type="evidence" value="ECO:0000250"/>
    <property type="project" value="UniProtKB"/>
</dbReference>
<dbReference type="GO" id="GO:0043235">
    <property type="term" value="C:receptor complex"/>
    <property type="evidence" value="ECO:0000250"/>
    <property type="project" value="UniProtKB"/>
</dbReference>
<dbReference type="GO" id="GO:1990409">
    <property type="term" value="F:adrenomedullin binding"/>
    <property type="evidence" value="ECO:0007669"/>
    <property type="project" value="Ensembl"/>
</dbReference>
<dbReference type="GO" id="GO:0001605">
    <property type="term" value="F:adrenomedullin receptor activity"/>
    <property type="evidence" value="ECO:0007669"/>
    <property type="project" value="Ensembl"/>
</dbReference>
<dbReference type="GO" id="GO:0015026">
    <property type="term" value="F:coreceptor activity"/>
    <property type="evidence" value="ECO:0000314"/>
    <property type="project" value="MGI"/>
</dbReference>
<dbReference type="GO" id="GO:0007189">
    <property type="term" value="P:adenylate cyclase-activating G protein-coupled receptor signaling pathway"/>
    <property type="evidence" value="ECO:0007669"/>
    <property type="project" value="Ensembl"/>
</dbReference>
<dbReference type="GO" id="GO:0034333">
    <property type="term" value="P:adherens junction assembly"/>
    <property type="evidence" value="ECO:0000315"/>
    <property type="project" value="UniProtKB"/>
</dbReference>
<dbReference type="GO" id="GO:1990410">
    <property type="term" value="P:adrenomedullin receptor signaling pathway"/>
    <property type="evidence" value="ECO:0007669"/>
    <property type="project" value="Ensembl"/>
</dbReference>
<dbReference type="GO" id="GO:0150060">
    <property type="term" value="P:amylin receptor 2 signaling pathway"/>
    <property type="evidence" value="ECO:0007669"/>
    <property type="project" value="Ensembl"/>
</dbReference>
<dbReference type="GO" id="GO:0001525">
    <property type="term" value="P:angiogenesis"/>
    <property type="evidence" value="ECO:0000250"/>
    <property type="project" value="UniProtKB"/>
</dbReference>
<dbReference type="GO" id="GO:0070831">
    <property type="term" value="P:basement membrane assembly"/>
    <property type="evidence" value="ECO:0000315"/>
    <property type="project" value="UniProtKB"/>
</dbReference>
<dbReference type="GO" id="GO:0070830">
    <property type="term" value="P:bicellular tight junction assembly"/>
    <property type="evidence" value="ECO:0000315"/>
    <property type="project" value="UniProtKB"/>
</dbReference>
<dbReference type="GO" id="GO:0006816">
    <property type="term" value="P:calcium ion transport"/>
    <property type="evidence" value="ECO:0000250"/>
    <property type="project" value="UniProtKB"/>
</dbReference>
<dbReference type="GO" id="GO:0035924">
    <property type="term" value="P:cellular response to vascular endothelial growth factor stimulus"/>
    <property type="evidence" value="ECO:0000315"/>
    <property type="project" value="UniProtKB"/>
</dbReference>
<dbReference type="GO" id="GO:0007186">
    <property type="term" value="P:G protein-coupled receptor signaling pathway"/>
    <property type="evidence" value="ECO:0000353"/>
    <property type="project" value="MGI"/>
</dbReference>
<dbReference type="GO" id="GO:0007507">
    <property type="term" value="P:heart development"/>
    <property type="evidence" value="ECO:0000315"/>
    <property type="project" value="UniProtKB"/>
</dbReference>
<dbReference type="GO" id="GO:0006886">
    <property type="term" value="P:intracellular protein transport"/>
    <property type="evidence" value="ECO:0007669"/>
    <property type="project" value="InterPro"/>
</dbReference>
<dbReference type="GO" id="GO:2000352">
    <property type="term" value="P:negative regulation of endothelial cell apoptotic process"/>
    <property type="evidence" value="ECO:0000315"/>
    <property type="project" value="UniProtKB"/>
</dbReference>
<dbReference type="GO" id="GO:0043116">
    <property type="term" value="P:negative regulation of vascular permeability"/>
    <property type="evidence" value="ECO:0000315"/>
    <property type="project" value="UniProtKB"/>
</dbReference>
<dbReference type="GO" id="GO:0045766">
    <property type="term" value="P:positive regulation of angiogenesis"/>
    <property type="evidence" value="ECO:0000315"/>
    <property type="project" value="UniProtKB"/>
</dbReference>
<dbReference type="GO" id="GO:0010628">
    <property type="term" value="P:positive regulation of gene expression"/>
    <property type="evidence" value="ECO:0000315"/>
    <property type="project" value="UniProtKB"/>
</dbReference>
<dbReference type="GO" id="GO:2001214">
    <property type="term" value="P:positive regulation of vasculogenesis"/>
    <property type="evidence" value="ECO:0000315"/>
    <property type="project" value="UniProtKB"/>
</dbReference>
<dbReference type="GO" id="GO:0072659">
    <property type="term" value="P:protein localization to plasma membrane"/>
    <property type="evidence" value="ECO:0000250"/>
    <property type="project" value="UniProtKB"/>
</dbReference>
<dbReference type="GO" id="GO:0015031">
    <property type="term" value="P:protein transport"/>
    <property type="evidence" value="ECO:0000250"/>
    <property type="project" value="UniProtKB"/>
</dbReference>
<dbReference type="GO" id="GO:0031623">
    <property type="term" value="P:receptor internalization"/>
    <property type="evidence" value="ECO:0000250"/>
    <property type="project" value="UniProtKB"/>
</dbReference>
<dbReference type="GO" id="GO:0008217">
    <property type="term" value="P:regulation of blood pressure"/>
    <property type="evidence" value="ECO:0000315"/>
    <property type="project" value="UniProtKB"/>
</dbReference>
<dbReference type="GO" id="GO:0008277">
    <property type="term" value="P:regulation of G protein-coupled receptor signaling pathway"/>
    <property type="evidence" value="ECO:0007669"/>
    <property type="project" value="InterPro"/>
</dbReference>
<dbReference type="GO" id="GO:0002040">
    <property type="term" value="P:sprouting angiogenesis"/>
    <property type="evidence" value="ECO:0000315"/>
    <property type="project" value="UniProtKB"/>
</dbReference>
<dbReference type="GO" id="GO:0097084">
    <property type="term" value="P:vascular associated smooth muscle cell development"/>
    <property type="evidence" value="ECO:0000315"/>
    <property type="project" value="UniProtKB"/>
</dbReference>
<dbReference type="GO" id="GO:0001570">
    <property type="term" value="P:vasculogenesis"/>
    <property type="evidence" value="ECO:0007669"/>
    <property type="project" value="Ensembl"/>
</dbReference>
<dbReference type="FunFam" id="1.10.150.510:FF:000003">
    <property type="entry name" value="Receptor activity-modifying protein 2"/>
    <property type="match status" value="1"/>
</dbReference>
<dbReference type="Gene3D" id="1.10.150.510">
    <property type="entry name" value="Receptor activity modifying family"/>
    <property type="match status" value="1"/>
</dbReference>
<dbReference type="InterPro" id="IPR006985">
    <property type="entry name" value="RAMP"/>
</dbReference>
<dbReference type="InterPro" id="IPR038126">
    <property type="entry name" value="RAMP_sf"/>
</dbReference>
<dbReference type="PANTHER" id="PTHR14076">
    <property type="entry name" value="RECEPTOR ACTIVITY MODIFYING PROTEIN RAMP"/>
    <property type="match status" value="1"/>
</dbReference>
<dbReference type="PANTHER" id="PTHR14076:SF9">
    <property type="entry name" value="RECEPTOR ACTIVITY-MODIFYING PROTEIN 2"/>
    <property type="match status" value="1"/>
</dbReference>
<dbReference type="Pfam" id="PF04901">
    <property type="entry name" value="RAMP"/>
    <property type="match status" value="1"/>
</dbReference>
<gene>
    <name evidence="7" type="primary">Ramp2</name>
</gene>
<protein>
    <recommendedName>
        <fullName>Receptor activity-modifying protein 2</fullName>
    </recommendedName>
</protein>
<proteinExistence type="evidence at protein level"/>
<accession>Q9WUP0</accession>
<accession>Q6IS25</accession>
<comment type="function">
    <text evidence="1 5">Accessory protein that interacts with and modulates the function of G-protein coupled receptors including calcitonin gene-related peptide type 1 receptor (CALCRL) and calcitonin receptor (CALCR) (PubMed:10854696). Required for the transport of CALCRL to the plasma membrane (By similarity). Together with CALCRL, form a receptor complex for adrenomedullin/ADM (PubMed:10854696). Together with CALCR, act as a receptor complex for calcitonin/CT/CALC. Together with CALCR, also act as a receptor complex for amylin/IAPP (By similarity).</text>
</comment>
<comment type="subunit">
    <text evidence="1">Heterodimer of CALCRL and RAMP2; the interaction forms the receptor complex for adrenomedullin/ADM. Heterodimer of CALCR and RAMP2; interaction forms the AMYR2 receptor complex for calcitonin/CALC and amylin/IAPP.</text>
</comment>
<comment type="subcellular location">
    <subcellularLocation>
        <location evidence="1">Cell membrane</location>
        <topology evidence="1">Single-pass type I membrane protein</topology>
    </subcellularLocation>
</comment>
<comment type="tissue specificity">
    <text evidence="4 5">Ubiquitous. Expressed predominantly in embryonic brain, lung and gut and in adult heart, lung, skeletal muscle and brain.</text>
</comment>
<comment type="similarity">
    <text evidence="6">Belongs to the RAMP family.</text>
</comment>
<organism>
    <name type="scientific">Mus musculus</name>
    <name type="common">Mouse</name>
    <dbReference type="NCBI Taxonomy" id="10090"/>
    <lineage>
        <taxon>Eukaryota</taxon>
        <taxon>Metazoa</taxon>
        <taxon>Chordata</taxon>
        <taxon>Craniata</taxon>
        <taxon>Vertebrata</taxon>
        <taxon>Euteleostomi</taxon>
        <taxon>Mammalia</taxon>
        <taxon>Eutheria</taxon>
        <taxon>Euarchontoglires</taxon>
        <taxon>Glires</taxon>
        <taxon>Rodentia</taxon>
        <taxon>Myomorpha</taxon>
        <taxon>Muroidea</taxon>
        <taxon>Muridae</taxon>
        <taxon>Murinae</taxon>
        <taxon>Mus</taxon>
        <taxon>Mus</taxon>
    </lineage>
</organism>
<feature type="signal peptide" evidence="2">
    <location>
        <begin position="1"/>
        <end position="44"/>
    </location>
</feature>
<feature type="chain" id="PRO_0000030173" description="Receptor activity-modifying protein 2">
    <location>
        <begin position="45"/>
        <end position="189"/>
    </location>
</feature>
<feature type="topological domain" description="Extracellular" evidence="2">
    <location>
        <begin position="45"/>
        <end position="157"/>
    </location>
</feature>
<feature type="transmembrane region" description="Helical" evidence="1">
    <location>
        <begin position="158"/>
        <end position="179"/>
    </location>
</feature>
<feature type="topological domain" description="Cytoplasmic" evidence="2">
    <location>
        <begin position="180"/>
        <end position="189"/>
    </location>
</feature>
<feature type="region of interest" description="Disordered" evidence="3">
    <location>
        <begin position="49"/>
        <end position="69"/>
    </location>
</feature>
<feature type="compositionally biased region" description="Polar residues" evidence="3">
    <location>
        <begin position="49"/>
        <end position="61"/>
    </location>
</feature>
<feature type="site" description="Required for CALCRL interaction" evidence="1">
    <location>
        <position position="153"/>
    </location>
</feature>
<feature type="glycosylation site" description="N-linked (GlcNAc...) asparagine" evidence="2">
    <location>
        <position position="50"/>
    </location>
</feature>
<feature type="glycosylation site" description="N-linked (GlcNAc...) asparagine" evidence="2">
    <location>
        <position position="58"/>
    </location>
</feature>
<feature type="glycosylation site" description="N-linked (GlcNAc...) asparagine" evidence="2">
    <location>
        <position position="99"/>
    </location>
</feature>
<feature type="glycosylation site" description="N-linked (GlcNAc...) asparagine" evidence="2">
    <location>
        <position position="144"/>
    </location>
</feature>
<feature type="disulfide bond" evidence="1">
    <location>
        <begin position="83"/>
        <end position="113"/>
    </location>
</feature>
<feature type="disulfide bond" evidence="1">
    <location>
        <begin position="98"/>
        <end position="145"/>
    </location>
</feature>
<feature type="sequence conflict" description="In Ref. 5; AAH69992." evidence="6" ref="5">
    <original>P</original>
    <variation>T</variation>
    <location>
        <position position="10"/>
    </location>
</feature>
<sequence length="189" mass="21017">MAPLRVERAPGGSRLGVTRAQRPTALCLPPLLLLLLLLLGAVSASPESLNQSLPESQNQSHPTEDSLVSKGKMEDYETHVLPCWYEYKSCMDSVKDWCNWTLISRHYSDLQNCLEYNADKFGLGFPNPLAENIILEAHLIHFANCSLVQPTFSDPPEDVLLAMIIAPICLIPFLVTLVVWRSKDSDAQA</sequence>
<reference key="1">
    <citation type="submission" date="1999-04" db="EMBL/GenBank/DDBJ databases">
        <title>Cloning and sequencing of mouse CGRP/adrenomedullin receptor subunits.</title>
        <authorList>
            <person name="Derst C."/>
            <person name="Preisig-Mueller R."/>
            <person name="Gerhardus J."/>
            <person name="Daut J."/>
        </authorList>
    </citation>
    <scope>NUCLEOTIDE SEQUENCE [MRNA]</scope>
</reference>
<reference key="2">
    <citation type="journal article" date="2000" name="Mol. Cell. Endocrinol.">
        <title>Mouse receptor-activity-modifying proteins 1, -2 and -3: amino acid sequence, expression and function.</title>
        <authorList>
            <person name="Husmann K."/>
            <person name="Sexton P.M."/>
            <person name="Fischer J.A."/>
            <person name="Born W."/>
        </authorList>
    </citation>
    <scope>NUCLEOTIDE SEQUENCE [MRNA]</scope>
    <scope>FUNCTION</scope>
    <scope>TISSUE SPECIFICITY</scope>
</reference>
<reference key="3">
    <citation type="journal article" date="2000" name="Biochem. Biophys. Res. Commun.">
        <title>Decreased gene expression of adrenomedullin receptor in mouse lungs during sepsis.</title>
        <authorList>
            <person name="Ono Y."/>
            <person name="Okano I."/>
            <person name="Kojima M."/>
            <person name="Okada K."/>
            <person name="Kangawa K."/>
        </authorList>
    </citation>
    <scope>NUCLEOTIDE SEQUENCE [MRNA]</scope>
    <scope>TISSUE SPECIFICITY</scope>
    <source>
        <strain>C57BL/6J</strain>
        <tissue>Lung</tissue>
    </source>
</reference>
<reference key="4">
    <citation type="journal article" date="2005" name="Science">
        <title>The transcriptional landscape of the mammalian genome.</title>
        <authorList>
            <person name="Carninci P."/>
            <person name="Kasukawa T."/>
            <person name="Katayama S."/>
            <person name="Gough J."/>
            <person name="Frith M.C."/>
            <person name="Maeda N."/>
            <person name="Oyama R."/>
            <person name="Ravasi T."/>
            <person name="Lenhard B."/>
            <person name="Wells C."/>
            <person name="Kodzius R."/>
            <person name="Shimokawa K."/>
            <person name="Bajic V.B."/>
            <person name="Brenner S.E."/>
            <person name="Batalov S."/>
            <person name="Forrest A.R."/>
            <person name="Zavolan M."/>
            <person name="Davis M.J."/>
            <person name="Wilming L.G."/>
            <person name="Aidinis V."/>
            <person name="Allen J.E."/>
            <person name="Ambesi-Impiombato A."/>
            <person name="Apweiler R."/>
            <person name="Aturaliya R.N."/>
            <person name="Bailey T.L."/>
            <person name="Bansal M."/>
            <person name="Baxter L."/>
            <person name="Beisel K.W."/>
            <person name="Bersano T."/>
            <person name="Bono H."/>
            <person name="Chalk A.M."/>
            <person name="Chiu K.P."/>
            <person name="Choudhary V."/>
            <person name="Christoffels A."/>
            <person name="Clutterbuck D.R."/>
            <person name="Crowe M.L."/>
            <person name="Dalla E."/>
            <person name="Dalrymple B.P."/>
            <person name="de Bono B."/>
            <person name="Della Gatta G."/>
            <person name="di Bernardo D."/>
            <person name="Down T."/>
            <person name="Engstrom P."/>
            <person name="Fagiolini M."/>
            <person name="Faulkner G."/>
            <person name="Fletcher C.F."/>
            <person name="Fukushima T."/>
            <person name="Furuno M."/>
            <person name="Futaki S."/>
            <person name="Gariboldi M."/>
            <person name="Georgii-Hemming P."/>
            <person name="Gingeras T.R."/>
            <person name="Gojobori T."/>
            <person name="Green R.E."/>
            <person name="Gustincich S."/>
            <person name="Harbers M."/>
            <person name="Hayashi Y."/>
            <person name="Hensch T.K."/>
            <person name="Hirokawa N."/>
            <person name="Hill D."/>
            <person name="Huminiecki L."/>
            <person name="Iacono M."/>
            <person name="Ikeo K."/>
            <person name="Iwama A."/>
            <person name="Ishikawa T."/>
            <person name="Jakt M."/>
            <person name="Kanapin A."/>
            <person name="Katoh M."/>
            <person name="Kawasawa Y."/>
            <person name="Kelso J."/>
            <person name="Kitamura H."/>
            <person name="Kitano H."/>
            <person name="Kollias G."/>
            <person name="Krishnan S.P."/>
            <person name="Kruger A."/>
            <person name="Kummerfeld S.K."/>
            <person name="Kurochkin I.V."/>
            <person name="Lareau L.F."/>
            <person name="Lazarevic D."/>
            <person name="Lipovich L."/>
            <person name="Liu J."/>
            <person name="Liuni S."/>
            <person name="McWilliam S."/>
            <person name="Madan Babu M."/>
            <person name="Madera M."/>
            <person name="Marchionni L."/>
            <person name="Matsuda H."/>
            <person name="Matsuzawa S."/>
            <person name="Miki H."/>
            <person name="Mignone F."/>
            <person name="Miyake S."/>
            <person name="Morris K."/>
            <person name="Mottagui-Tabar S."/>
            <person name="Mulder N."/>
            <person name="Nakano N."/>
            <person name="Nakauchi H."/>
            <person name="Ng P."/>
            <person name="Nilsson R."/>
            <person name="Nishiguchi S."/>
            <person name="Nishikawa S."/>
            <person name="Nori F."/>
            <person name="Ohara O."/>
            <person name="Okazaki Y."/>
            <person name="Orlando V."/>
            <person name="Pang K.C."/>
            <person name="Pavan W.J."/>
            <person name="Pavesi G."/>
            <person name="Pesole G."/>
            <person name="Petrovsky N."/>
            <person name="Piazza S."/>
            <person name="Reed J."/>
            <person name="Reid J.F."/>
            <person name="Ring B.Z."/>
            <person name="Ringwald M."/>
            <person name="Rost B."/>
            <person name="Ruan Y."/>
            <person name="Salzberg S.L."/>
            <person name="Sandelin A."/>
            <person name="Schneider C."/>
            <person name="Schoenbach C."/>
            <person name="Sekiguchi K."/>
            <person name="Semple C.A."/>
            <person name="Seno S."/>
            <person name="Sessa L."/>
            <person name="Sheng Y."/>
            <person name="Shibata Y."/>
            <person name="Shimada H."/>
            <person name="Shimada K."/>
            <person name="Silva D."/>
            <person name="Sinclair B."/>
            <person name="Sperling S."/>
            <person name="Stupka E."/>
            <person name="Sugiura K."/>
            <person name="Sultana R."/>
            <person name="Takenaka Y."/>
            <person name="Taki K."/>
            <person name="Tammoja K."/>
            <person name="Tan S.L."/>
            <person name="Tang S."/>
            <person name="Taylor M.S."/>
            <person name="Tegner J."/>
            <person name="Teichmann S.A."/>
            <person name="Ueda H.R."/>
            <person name="van Nimwegen E."/>
            <person name="Verardo R."/>
            <person name="Wei C.L."/>
            <person name="Yagi K."/>
            <person name="Yamanishi H."/>
            <person name="Zabarovsky E."/>
            <person name="Zhu S."/>
            <person name="Zimmer A."/>
            <person name="Hide W."/>
            <person name="Bult C."/>
            <person name="Grimmond S.M."/>
            <person name="Teasdale R.D."/>
            <person name="Liu E.T."/>
            <person name="Brusic V."/>
            <person name="Quackenbush J."/>
            <person name="Wahlestedt C."/>
            <person name="Mattick J.S."/>
            <person name="Hume D.A."/>
            <person name="Kai C."/>
            <person name="Sasaki D."/>
            <person name="Tomaru Y."/>
            <person name="Fukuda S."/>
            <person name="Kanamori-Katayama M."/>
            <person name="Suzuki M."/>
            <person name="Aoki J."/>
            <person name="Arakawa T."/>
            <person name="Iida J."/>
            <person name="Imamura K."/>
            <person name="Itoh M."/>
            <person name="Kato T."/>
            <person name="Kawaji H."/>
            <person name="Kawagashira N."/>
            <person name="Kawashima T."/>
            <person name="Kojima M."/>
            <person name="Kondo S."/>
            <person name="Konno H."/>
            <person name="Nakano K."/>
            <person name="Ninomiya N."/>
            <person name="Nishio T."/>
            <person name="Okada M."/>
            <person name="Plessy C."/>
            <person name="Shibata K."/>
            <person name="Shiraki T."/>
            <person name="Suzuki S."/>
            <person name="Tagami M."/>
            <person name="Waki K."/>
            <person name="Watahiki A."/>
            <person name="Okamura-Oho Y."/>
            <person name="Suzuki H."/>
            <person name="Kawai J."/>
            <person name="Hayashizaki Y."/>
        </authorList>
    </citation>
    <scope>NUCLEOTIDE SEQUENCE [LARGE SCALE MRNA]</scope>
    <source>
        <strain>C57BL/6J</strain>
        <tissue>Embryo</tissue>
    </source>
</reference>
<reference key="5">
    <citation type="journal article" date="2004" name="Genome Res.">
        <title>The status, quality, and expansion of the NIH full-length cDNA project: the Mammalian Gene Collection (MGC).</title>
        <authorList>
            <consortium name="The MGC Project Team"/>
        </authorList>
    </citation>
    <scope>NUCLEOTIDE SEQUENCE [LARGE SCALE MRNA]</scope>
    <source>
        <tissue>Jaw</tissue>
        <tissue>Limb</tissue>
    </source>
</reference>
<reference key="6">
    <citation type="journal article" date="2010" name="Cell">
        <title>A tissue-specific atlas of mouse protein phosphorylation and expression.</title>
        <authorList>
            <person name="Huttlin E.L."/>
            <person name="Jedrychowski M.P."/>
            <person name="Elias J.E."/>
            <person name="Goswami T."/>
            <person name="Rad R."/>
            <person name="Beausoleil S.A."/>
            <person name="Villen J."/>
            <person name="Haas W."/>
            <person name="Sowa M.E."/>
            <person name="Gygi S.P."/>
        </authorList>
    </citation>
    <scope>IDENTIFICATION BY MASS SPECTROMETRY [LARGE SCALE ANALYSIS]</scope>
    <source>
        <tissue>Lung</tissue>
    </source>
</reference>
<evidence type="ECO:0000250" key="1">
    <source>
        <dbReference type="UniProtKB" id="O60895"/>
    </source>
</evidence>
<evidence type="ECO:0000255" key="2"/>
<evidence type="ECO:0000256" key="3">
    <source>
        <dbReference type="SAM" id="MobiDB-lite"/>
    </source>
</evidence>
<evidence type="ECO:0000269" key="4">
    <source>
    </source>
</evidence>
<evidence type="ECO:0000269" key="5">
    <source>
    </source>
</evidence>
<evidence type="ECO:0000305" key="6"/>
<evidence type="ECO:0000312" key="7">
    <source>
        <dbReference type="MGI" id="MGI:1859650"/>
    </source>
</evidence>
<keyword id="KW-1003">Cell membrane</keyword>
<keyword id="KW-1015">Disulfide bond</keyword>
<keyword id="KW-0325">Glycoprotein</keyword>
<keyword id="KW-0472">Membrane</keyword>
<keyword id="KW-0675">Receptor</keyword>
<keyword id="KW-1185">Reference proteome</keyword>
<keyword id="KW-0732">Signal</keyword>
<keyword id="KW-0812">Transmembrane</keyword>
<keyword id="KW-1133">Transmembrane helix</keyword>
<keyword id="KW-0813">Transport</keyword>
<name>RAMP2_MOUSE</name>